<organism>
    <name type="scientific">Drosophila melanogaster</name>
    <name type="common">Fruit fly</name>
    <dbReference type="NCBI Taxonomy" id="7227"/>
    <lineage>
        <taxon>Eukaryota</taxon>
        <taxon>Metazoa</taxon>
        <taxon>Ecdysozoa</taxon>
        <taxon>Arthropoda</taxon>
        <taxon>Hexapoda</taxon>
        <taxon>Insecta</taxon>
        <taxon>Pterygota</taxon>
        <taxon>Neoptera</taxon>
        <taxon>Endopterygota</taxon>
        <taxon>Diptera</taxon>
        <taxon>Brachycera</taxon>
        <taxon>Muscomorpha</taxon>
        <taxon>Ephydroidea</taxon>
        <taxon>Drosophilidae</taxon>
        <taxon>Drosophila</taxon>
        <taxon>Sophophora</taxon>
    </lineage>
</organism>
<accession>Q9VKQ9</accession>
<accession>B3DMX8</accession>
<proteinExistence type="evidence at protein level"/>
<feature type="chain" id="PRO_0000429379" description="Protein dpy-30 homolog">
    <location>
        <begin position="1"/>
        <end position="134"/>
    </location>
</feature>
<feature type="region of interest" description="Disordered" evidence="3">
    <location>
        <begin position="1"/>
        <end position="81"/>
    </location>
</feature>
<feature type="compositionally biased region" description="Low complexity" evidence="3">
    <location>
        <begin position="31"/>
        <end position="68"/>
    </location>
</feature>
<feature type="compositionally biased region" description="Polar residues" evidence="3">
    <location>
        <begin position="71"/>
        <end position="81"/>
    </location>
</feature>
<name>DPY30_DROME</name>
<dbReference type="EMBL" id="AE014134">
    <property type="protein sequence ID" value="AAF53001.1"/>
    <property type="molecule type" value="Genomic_DNA"/>
</dbReference>
<dbReference type="EMBL" id="BT032766">
    <property type="protein sequence ID" value="ACD81780.2"/>
    <property type="molecule type" value="mRNA"/>
</dbReference>
<dbReference type="RefSeq" id="NP_609445.1">
    <property type="nucleotide sequence ID" value="NM_135601.4"/>
</dbReference>
<dbReference type="SMR" id="Q9VKQ9"/>
<dbReference type="BioGRID" id="60554">
    <property type="interactions" value="12"/>
</dbReference>
<dbReference type="ComplexPortal" id="CPX-2284">
    <property type="entry name" value="Histone-lysine N-methyltransferase/demethylase TRR complex"/>
</dbReference>
<dbReference type="ComplexPortal" id="CPX-2287">
    <property type="entry name" value="Histone-lysine N-methyltransferase TRX complex"/>
</dbReference>
<dbReference type="ComplexPortal" id="CPX-2798">
    <property type="entry name" value="COMPASS complex"/>
</dbReference>
<dbReference type="FunCoup" id="Q9VKQ9">
    <property type="interactions" value="26"/>
</dbReference>
<dbReference type="IntAct" id="Q9VKQ9">
    <property type="interactions" value="9"/>
</dbReference>
<dbReference type="MINT" id="Q9VKQ9"/>
<dbReference type="STRING" id="7227.FBpp0079701"/>
<dbReference type="PaxDb" id="7227-FBpp0079701"/>
<dbReference type="DNASU" id="34480"/>
<dbReference type="EnsemblMetazoa" id="FBtr0080112">
    <property type="protein sequence ID" value="FBpp0079701"/>
    <property type="gene ID" value="FBgn0032293"/>
</dbReference>
<dbReference type="GeneID" id="34480"/>
<dbReference type="KEGG" id="dme:Dmel_CG6444"/>
<dbReference type="UCSC" id="CG6444-RA">
    <property type="organism name" value="d. melanogaster"/>
</dbReference>
<dbReference type="AGR" id="FB:FBgn0032293"/>
<dbReference type="CTD" id="34480"/>
<dbReference type="FlyBase" id="FBgn0032293">
    <property type="gene designation" value="Dpy-30L1"/>
</dbReference>
<dbReference type="VEuPathDB" id="VectorBase:FBgn0032293"/>
<dbReference type="eggNOG" id="KOG4109">
    <property type="taxonomic scope" value="Eukaryota"/>
</dbReference>
<dbReference type="GeneTree" id="ENSGT00940000173866"/>
<dbReference type="HOGENOM" id="CLU_135823_1_0_1"/>
<dbReference type="InParanoid" id="Q9VKQ9"/>
<dbReference type="OMA" id="GCDENNA"/>
<dbReference type="OrthoDB" id="417678at2759"/>
<dbReference type="PhylomeDB" id="Q9VKQ9"/>
<dbReference type="BioGRID-ORCS" id="34480">
    <property type="hits" value="0 hits in 1 CRISPR screen"/>
</dbReference>
<dbReference type="GenomeRNAi" id="34480"/>
<dbReference type="PRO" id="PR:Q9VKQ9"/>
<dbReference type="Proteomes" id="UP000000803">
    <property type="component" value="Chromosome 2L"/>
</dbReference>
<dbReference type="Bgee" id="FBgn0032293">
    <property type="expression patterns" value="Expressed in adult class III enteroendocrine cell in adult midgut (Drosophila) and 100 other cell types or tissues"/>
</dbReference>
<dbReference type="GO" id="GO:0044665">
    <property type="term" value="C:MLL1/2 complex"/>
    <property type="evidence" value="ECO:0000250"/>
    <property type="project" value="FlyBase"/>
</dbReference>
<dbReference type="GO" id="GO:0044666">
    <property type="term" value="C:MLL3/4 complex"/>
    <property type="evidence" value="ECO:0000314"/>
    <property type="project" value="FlyBase"/>
</dbReference>
<dbReference type="GO" id="GO:0048188">
    <property type="term" value="C:Set1C/COMPASS complex"/>
    <property type="evidence" value="ECO:0000314"/>
    <property type="project" value="FlyBase"/>
</dbReference>
<dbReference type="GO" id="GO:0006325">
    <property type="term" value="P:chromatin organization"/>
    <property type="evidence" value="ECO:0007669"/>
    <property type="project" value="UniProtKB-KW"/>
</dbReference>
<dbReference type="GO" id="GO:0007507">
    <property type="term" value="P:heart development"/>
    <property type="evidence" value="ECO:0000315"/>
    <property type="project" value="FlyBase"/>
</dbReference>
<dbReference type="CDD" id="cd22965">
    <property type="entry name" value="DD_DPY30_SDC1"/>
    <property type="match status" value="1"/>
</dbReference>
<dbReference type="FunFam" id="1.20.890.10:FF:000003">
    <property type="entry name" value="protein dpy-30 homolog"/>
    <property type="match status" value="1"/>
</dbReference>
<dbReference type="Gene3D" id="1.20.890.10">
    <property type="entry name" value="cAMP-dependent protein kinase regulatory subunit, dimerization-anchoring domain"/>
    <property type="match status" value="1"/>
</dbReference>
<dbReference type="InterPro" id="IPR007858">
    <property type="entry name" value="Dpy-30_motif"/>
</dbReference>
<dbReference type="InterPro" id="IPR049629">
    <property type="entry name" value="DPY30_SDC1_DD"/>
</dbReference>
<dbReference type="InterPro" id="IPR037856">
    <property type="entry name" value="Sdc1/DPY30"/>
</dbReference>
<dbReference type="PANTHER" id="PTHR23356:SF16">
    <property type="entry name" value="DPY30 DOMAIN CONTAINING 2"/>
    <property type="match status" value="1"/>
</dbReference>
<dbReference type="PANTHER" id="PTHR23356">
    <property type="entry name" value="DPY30-RELATED"/>
    <property type="match status" value="1"/>
</dbReference>
<dbReference type="Pfam" id="PF05186">
    <property type="entry name" value="Dpy-30"/>
    <property type="match status" value="1"/>
</dbReference>
<reference evidence="8" key="1">
    <citation type="journal article" date="2000" name="Science">
        <title>The genome sequence of Drosophila melanogaster.</title>
        <authorList>
            <person name="Adams M.D."/>
            <person name="Celniker S.E."/>
            <person name="Holt R.A."/>
            <person name="Evans C.A."/>
            <person name="Gocayne J.D."/>
            <person name="Amanatides P.G."/>
            <person name="Scherer S.E."/>
            <person name="Li P.W."/>
            <person name="Hoskins R.A."/>
            <person name="Galle R.F."/>
            <person name="George R.A."/>
            <person name="Lewis S.E."/>
            <person name="Richards S."/>
            <person name="Ashburner M."/>
            <person name="Henderson S.N."/>
            <person name="Sutton G.G."/>
            <person name="Wortman J.R."/>
            <person name="Yandell M.D."/>
            <person name="Zhang Q."/>
            <person name="Chen L.X."/>
            <person name="Brandon R.C."/>
            <person name="Rogers Y.-H.C."/>
            <person name="Blazej R.G."/>
            <person name="Champe M."/>
            <person name="Pfeiffer B.D."/>
            <person name="Wan K.H."/>
            <person name="Doyle C."/>
            <person name="Baxter E.G."/>
            <person name="Helt G."/>
            <person name="Nelson C.R."/>
            <person name="Miklos G.L.G."/>
            <person name="Abril J.F."/>
            <person name="Agbayani A."/>
            <person name="An H.-J."/>
            <person name="Andrews-Pfannkoch C."/>
            <person name="Baldwin D."/>
            <person name="Ballew R.M."/>
            <person name="Basu A."/>
            <person name="Baxendale J."/>
            <person name="Bayraktaroglu L."/>
            <person name="Beasley E.M."/>
            <person name="Beeson K.Y."/>
            <person name="Benos P.V."/>
            <person name="Berman B.P."/>
            <person name="Bhandari D."/>
            <person name="Bolshakov S."/>
            <person name="Borkova D."/>
            <person name="Botchan M.R."/>
            <person name="Bouck J."/>
            <person name="Brokstein P."/>
            <person name="Brottier P."/>
            <person name="Burtis K.C."/>
            <person name="Busam D.A."/>
            <person name="Butler H."/>
            <person name="Cadieu E."/>
            <person name="Center A."/>
            <person name="Chandra I."/>
            <person name="Cherry J.M."/>
            <person name="Cawley S."/>
            <person name="Dahlke C."/>
            <person name="Davenport L.B."/>
            <person name="Davies P."/>
            <person name="de Pablos B."/>
            <person name="Delcher A."/>
            <person name="Deng Z."/>
            <person name="Mays A.D."/>
            <person name="Dew I."/>
            <person name="Dietz S.M."/>
            <person name="Dodson K."/>
            <person name="Doup L.E."/>
            <person name="Downes M."/>
            <person name="Dugan-Rocha S."/>
            <person name="Dunkov B.C."/>
            <person name="Dunn P."/>
            <person name="Durbin K.J."/>
            <person name="Evangelista C.C."/>
            <person name="Ferraz C."/>
            <person name="Ferriera S."/>
            <person name="Fleischmann W."/>
            <person name="Fosler C."/>
            <person name="Gabrielian A.E."/>
            <person name="Garg N.S."/>
            <person name="Gelbart W.M."/>
            <person name="Glasser K."/>
            <person name="Glodek A."/>
            <person name="Gong F."/>
            <person name="Gorrell J.H."/>
            <person name="Gu Z."/>
            <person name="Guan P."/>
            <person name="Harris M."/>
            <person name="Harris N.L."/>
            <person name="Harvey D.A."/>
            <person name="Heiman T.J."/>
            <person name="Hernandez J.R."/>
            <person name="Houck J."/>
            <person name="Hostin D."/>
            <person name="Houston K.A."/>
            <person name="Howland T.J."/>
            <person name="Wei M.-H."/>
            <person name="Ibegwam C."/>
            <person name="Jalali M."/>
            <person name="Kalush F."/>
            <person name="Karpen G.H."/>
            <person name="Ke Z."/>
            <person name="Kennison J.A."/>
            <person name="Ketchum K.A."/>
            <person name="Kimmel B.E."/>
            <person name="Kodira C.D."/>
            <person name="Kraft C.L."/>
            <person name="Kravitz S."/>
            <person name="Kulp D."/>
            <person name="Lai Z."/>
            <person name="Lasko P."/>
            <person name="Lei Y."/>
            <person name="Levitsky A.A."/>
            <person name="Li J.H."/>
            <person name="Li Z."/>
            <person name="Liang Y."/>
            <person name="Lin X."/>
            <person name="Liu X."/>
            <person name="Mattei B."/>
            <person name="McIntosh T.C."/>
            <person name="McLeod M.P."/>
            <person name="McPherson D."/>
            <person name="Merkulov G."/>
            <person name="Milshina N.V."/>
            <person name="Mobarry C."/>
            <person name="Morris J."/>
            <person name="Moshrefi A."/>
            <person name="Mount S.M."/>
            <person name="Moy M."/>
            <person name="Murphy B."/>
            <person name="Murphy L."/>
            <person name="Muzny D.M."/>
            <person name="Nelson D.L."/>
            <person name="Nelson D.R."/>
            <person name="Nelson K.A."/>
            <person name="Nixon K."/>
            <person name="Nusskern D.R."/>
            <person name="Pacleb J.M."/>
            <person name="Palazzolo M."/>
            <person name="Pittman G.S."/>
            <person name="Pan S."/>
            <person name="Pollard J."/>
            <person name="Puri V."/>
            <person name="Reese M.G."/>
            <person name="Reinert K."/>
            <person name="Remington K."/>
            <person name="Saunders R.D.C."/>
            <person name="Scheeler F."/>
            <person name="Shen H."/>
            <person name="Shue B.C."/>
            <person name="Siden-Kiamos I."/>
            <person name="Simpson M."/>
            <person name="Skupski M.P."/>
            <person name="Smith T.J."/>
            <person name="Spier E."/>
            <person name="Spradling A.C."/>
            <person name="Stapleton M."/>
            <person name="Strong R."/>
            <person name="Sun E."/>
            <person name="Svirskas R."/>
            <person name="Tector C."/>
            <person name="Turner R."/>
            <person name="Venter E."/>
            <person name="Wang A.H."/>
            <person name="Wang X."/>
            <person name="Wang Z.-Y."/>
            <person name="Wassarman D.A."/>
            <person name="Weinstock G.M."/>
            <person name="Weissenbach J."/>
            <person name="Williams S.M."/>
            <person name="Woodage T."/>
            <person name="Worley K.C."/>
            <person name="Wu D."/>
            <person name="Yang S."/>
            <person name="Yao Q.A."/>
            <person name="Ye J."/>
            <person name="Yeh R.-F."/>
            <person name="Zaveri J.S."/>
            <person name="Zhan M."/>
            <person name="Zhang G."/>
            <person name="Zhao Q."/>
            <person name="Zheng L."/>
            <person name="Zheng X.H."/>
            <person name="Zhong F.N."/>
            <person name="Zhong W."/>
            <person name="Zhou X."/>
            <person name="Zhu S.C."/>
            <person name="Zhu X."/>
            <person name="Smith H.O."/>
            <person name="Gibbs R.A."/>
            <person name="Myers E.W."/>
            <person name="Rubin G.M."/>
            <person name="Venter J.C."/>
        </authorList>
    </citation>
    <scope>NUCLEOTIDE SEQUENCE [LARGE SCALE GENOMIC DNA]</scope>
    <source>
        <strain>Berkeley</strain>
    </source>
</reference>
<reference evidence="8" key="2">
    <citation type="journal article" date="2002" name="Genome Biol.">
        <title>Annotation of the Drosophila melanogaster euchromatic genome: a systematic review.</title>
        <authorList>
            <person name="Misra S."/>
            <person name="Crosby M.A."/>
            <person name="Mungall C.J."/>
            <person name="Matthews B.B."/>
            <person name="Campbell K.S."/>
            <person name="Hradecky P."/>
            <person name="Huang Y."/>
            <person name="Kaminker J.S."/>
            <person name="Millburn G.H."/>
            <person name="Prochnik S.E."/>
            <person name="Smith C.D."/>
            <person name="Tupy J.L."/>
            <person name="Whitfield E.J."/>
            <person name="Bayraktaroglu L."/>
            <person name="Berman B.P."/>
            <person name="Bettencourt B.R."/>
            <person name="Celniker S.E."/>
            <person name="de Grey A.D.N.J."/>
            <person name="Drysdale R.A."/>
            <person name="Harris N.L."/>
            <person name="Richter J."/>
            <person name="Russo S."/>
            <person name="Schroeder A.J."/>
            <person name="Shu S.Q."/>
            <person name="Stapleton M."/>
            <person name="Yamada C."/>
            <person name="Ashburner M."/>
            <person name="Gelbart W.M."/>
            <person name="Rubin G.M."/>
            <person name="Lewis S.E."/>
        </authorList>
    </citation>
    <scope>GENOME REANNOTATION</scope>
    <source>
        <strain>Berkeley</strain>
    </source>
</reference>
<reference evidence="9" key="3">
    <citation type="submission" date="2009-01" db="EMBL/GenBank/DDBJ databases">
        <authorList>
            <person name="Carlson J."/>
            <person name="Booth B."/>
            <person name="Frise E."/>
            <person name="Park S."/>
            <person name="Wan K."/>
            <person name="Yu C."/>
            <person name="Celniker S."/>
        </authorList>
    </citation>
    <scope>NUCLEOTIDE SEQUENCE [LARGE SCALE MRNA]</scope>
    <source>
        <strain>Berkeley</strain>
    </source>
</reference>
<reference evidence="7" key="4">
    <citation type="journal article" date="2008" name="BMC Dev. Biol.">
        <title>Dumpy-30 family members as determinants of male fertility and interaction partners of metal-responsive transcription factor 1 (MTF-1) in Drosophila.</title>
        <authorList>
            <person name="Vardanyan A."/>
            <person name="Atanesyan L."/>
            <person name="Egli D."/>
            <person name="Raja S.J."/>
            <person name="Steinmann-Zwicky M."/>
            <person name="Renkawitz-Pohl R."/>
            <person name="Georgiev O."/>
            <person name="Schaffner W."/>
        </authorList>
    </citation>
    <scope>FUNCTION</scope>
    <scope>TISSUE SPECIFICITY</scope>
    <scope>DISRUPTION PHENOTYPE</scope>
</reference>
<reference evidence="7" key="5">
    <citation type="journal article" date="2011" name="EMBO J.">
        <title>Drosophila Set1 is the major histone H3 lysine 4 trimethyltransferase with role in transcription.</title>
        <authorList>
            <person name="Ardehali M.B."/>
            <person name="Mei A."/>
            <person name="Zobeck K.L."/>
            <person name="Caron M."/>
            <person name="Lis J.T."/>
            <person name="Kusch T."/>
        </authorList>
    </citation>
    <scope>FUNCTION</scope>
    <scope>IDENTIFICATION IN THE SET1 COMPLEX</scope>
    <scope>SUBCELLULAR LOCATION</scope>
</reference>
<reference evidence="7" key="6">
    <citation type="journal article" date="2011" name="Mol. Cell. Biol.">
        <title>The COMPASS family of H3K4 methylases in Drosophila.</title>
        <authorList>
            <person name="Mohan M."/>
            <person name="Herz H.M."/>
            <person name="Smith E.R."/>
            <person name="Zhang Y."/>
            <person name="Jackson J."/>
            <person name="Washburn M.P."/>
            <person name="Florens L."/>
            <person name="Eissenberg J.C."/>
            <person name="Shilatifard A."/>
        </authorList>
    </citation>
    <scope>FUNCTION</scope>
    <scope>IDENTIFICATION IN THE SET1 AND MLL3/4 COMPLEXES</scope>
</reference>
<comment type="function">
    <text evidence="4 5 6">Component of the SET1 complex that specifically di- and trimethylates 'Lys-4' of histone H3 and of the MLL3/4 complex which also methylates histone H3 'Lys-4'. Inhibits MTF-1 transcription factor activity.</text>
</comment>
<comment type="subunit">
    <text evidence="5 6">Core component of several methyltransferase-containing complexes. Component of the SET1 complex, composed at least of the catalytic subunit Set1, wds/WDR5, Wdr82, Rbbp5, ash2, Cfp1/CXXC1, hcf and Dpy-30L1. Component of the MLL3/4 complex composed at least of the catalytic subunit trr, ash2, Rbbp5, Dpy-30L1, wds, hcf, ptip, Pa1, Utx, Lpt and Ncoa6.</text>
</comment>
<comment type="subcellular location">
    <subcellularLocation>
        <location evidence="5">Nucleus</location>
    </subcellularLocation>
</comment>
<comment type="tissue specificity">
    <text evidence="4">Expressed in larval brain, gonad, imaginal disk and salivary gland and in adult brain, testis, ovary and salivary gland.</text>
</comment>
<comment type="disruption phenotype">
    <text evidence="4">Viable and fertile with no overt disruption of metal homeostasis.</text>
</comment>
<comment type="similarity">
    <text evidence="2">Belongs to the dpy-30 family.</text>
</comment>
<keyword id="KW-0156">Chromatin regulator</keyword>
<keyword id="KW-0539">Nucleus</keyword>
<keyword id="KW-1185">Reference proteome</keyword>
<keyword id="KW-0804">Transcription</keyword>
<keyword id="KW-0805">Transcription regulation</keyword>
<protein>
    <recommendedName>
        <fullName evidence="1">Protein dpy-30 homolog</fullName>
    </recommendedName>
    <alternativeName>
        <fullName evidence="8">Dpy-30-like protein 1</fullName>
    </alternativeName>
</protein>
<gene>
    <name evidence="8 10" type="primary">Dpy-30L1</name>
    <name type="ORF">CG6444</name>
</gene>
<sequence length="134" mass="13794">MEAKTDAPISPAPTTNPPAEAGKEPNASSNAQANPTAAPGAPPSGAIAVGQSTNPVAQQQQQPAVAKKPSSETNNMPTRQYLDQTVAPVLLHGMQALARERPTDPIQFLASYLLKHSNGCDENNASAAAVDNNS</sequence>
<evidence type="ECO:0000250" key="1">
    <source>
        <dbReference type="UniProtKB" id="Q9C005"/>
    </source>
</evidence>
<evidence type="ECO:0000255" key="2"/>
<evidence type="ECO:0000256" key="3">
    <source>
        <dbReference type="SAM" id="MobiDB-lite"/>
    </source>
</evidence>
<evidence type="ECO:0000269" key="4">
    <source>
    </source>
</evidence>
<evidence type="ECO:0000269" key="5">
    <source>
    </source>
</evidence>
<evidence type="ECO:0000269" key="6">
    <source>
    </source>
</evidence>
<evidence type="ECO:0000305" key="7"/>
<evidence type="ECO:0000312" key="8">
    <source>
        <dbReference type="EMBL" id="AAF53001.1"/>
    </source>
</evidence>
<evidence type="ECO:0000312" key="9">
    <source>
        <dbReference type="EMBL" id="ACD81780.2"/>
    </source>
</evidence>
<evidence type="ECO:0000312" key="10">
    <source>
        <dbReference type="FlyBase" id="FBgn0032293"/>
    </source>
</evidence>